<keyword id="KW-1015">Disulfide bond</keyword>
<keyword id="KW-0244">Early protein</keyword>
<keyword id="KW-0325">Glycoprotein</keyword>
<keyword id="KW-0348">Hemagglutinin</keyword>
<keyword id="KW-1043">Host membrane</keyword>
<keyword id="KW-0393">Immunoglobulin domain</keyword>
<keyword id="KW-0426">Late protein</keyword>
<keyword id="KW-0472">Membrane</keyword>
<keyword id="KW-0732">Signal</keyword>
<keyword id="KW-0812">Transmembrane</keyword>
<keyword id="KW-1133">Transmembrane helix</keyword>
<keyword id="KW-0261">Viral envelope protein</keyword>
<keyword id="KW-0946">Virion</keyword>
<evidence type="ECO:0000250" key="1">
    <source>
        <dbReference type="UniProtKB" id="Q01218"/>
    </source>
</evidence>
<evidence type="ECO:0000255" key="2"/>
<evidence type="ECO:0000255" key="3">
    <source>
        <dbReference type="PROSITE-ProRule" id="PRU00114"/>
    </source>
</evidence>
<evidence type="ECO:0000256" key="4">
    <source>
        <dbReference type="SAM" id="MobiDB-lite"/>
    </source>
</evidence>
<evidence type="ECO:0000305" key="5"/>
<reference key="1">
    <citation type="journal article" date="1986" name="Virology">
        <title>Nucleotide sequence of the vaccinia virus hemagglutinin gene.</title>
        <authorList>
            <person name="Shida H."/>
        </authorList>
    </citation>
    <scope>NUCLEOTIDE SEQUENCE [GENOMIC DNA]</scope>
</reference>
<gene>
    <name type="primary">OPG185</name>
    <name type="synonym">HA</name>
    <name type="ORF">A56R</name>
</gene>
<protein>
    <recommendedName>
        <fullName>Protein OPG185</fullName>
    </recommendedName>
    <alternativeName>
        <fullName>Hemagglutinin</fullName>
    </alternativeName>
</protein>
<comment type="function">
    <text evidence="1">Prevents cell to cell fusion by interacting with and directing the viral OPG040 protein on the host plasma membrane. The OPG185-OPG040 complex associates with components of the entry fusion complex (EFC) presumably to avoid superinfection and syncytium formation. Via its interaction with C3/VCP protein, protects the infected cell and probably also the extracellular enveloped virus from complement attack.</text>
</comment>
<comment type="subunit">
    <text evidence="1">Heterodimerizes with OPG040. The heterodimer OPG185-OPG040 interacts with components of the entry fusion complex OPG143 and OPG094. Heterodimer with C3/VPC protein; disulfide-linked.</text>
</comment>
<comment type="subcellular location">
    <subcellularLocation>
        <location evidence="1">Virion membrane</location>
        <topology evidence="1">Single-pass type I membrane protein</topology>
    </subcellularLocation>
    <subcellularLocation>
        <location evidence="1">Host membrane</location>
        <topology evidence="1">Single-pass type I membrane protein</topology>
    </subcellularLocation>
    <text evidence="1">Component of extracellular enveloped virus (EEV) but not intracellular mature virus (IMV). Component of the outermost membrane of EEV.</text>
</comment>
<comment type="induction">
    <text>Expressed in the early phase of the viral replicative cycle.</text>
</comment>
<comment type="PTM">
    <text evidence="1">Glycosylated; contains phosphate and sulfate-substituted glycans. O-glycosylation is required for hemagglutination and hemadsorption activities of infected cell membranes.</text>
</comment>
<comment type="similarity">
    <text evidence="5">Belongs to the orthopoxvirus OPG185 family.</text>
</comment>
<accession>P08714</accession>
<sequence>MTRLPILLLLISLVYATPFPQTSKKIGDDATLSCNRNNTNDYVVMSAWYKEPNSIILLAAKSDVLYFDNYTKDKISYDSPYDDLVTTITIKSLTARDAGTYVCAFFMTSTTNDTDKVDYEEYSTELIVNTDSESTIDIILSGSTHSPETSSEKPEDIDNFNCSSVFEIATPEPITDNVEDHTDTVTYTSDSINTVSASSGESTTDETPEPITDKEEDHTVTDTVSYTTVSTSSGIVTTKSTTDDADLYDTYNDNDTVPPTTVGGSTTSISNYKTKDFVEIFGITALIILSAVAIFCITYYIYNKRSRKYKTENKV</sequence>
<organismHost>
    <name type="scientific">Homo sapiens</name>
    <name type="common">Human</name>
    <dbReference type="NCBI Taxonomy" id="9606"/>
</organismHost>
<dbReference type="EMBL" id="M14783">
    <property type="protein sequence ID" value="AAA48251.1"/>
    <property type="molecule type" value="Genomic_DNA"/>
</dbReference>
<dbReference type="PIR" id="A27789">
    <property type="entry name" value="HNVZVV"/>
</dbReference>
<dbReference type="SMR" id="P08714"/>
<dbReference type="GlyCosmos" id="P08714">
    <property type="glycosylation" value="5 sites, No reported glycans"/>
</dbReference>
<dbReference type="GO" id="GO:0033644">
    <property type="term" value="C:host cell membrane"/>
    <property type="evidence" value="ECO:0007669"/>
    <property type="project" value="UniProtKB-SubCell"/>
</dbReference>
<dbReference type="GO" id="GO:0016020">
    <property type="term" value="C:membrane"/>
    <property type="evidence" value="ECO:0007669"/>
    <property type="project" value="UniProtKB-KW"/>
</dbReference>
<dbReference type="GO" id="GO:0019031">
    <property type="term" value="C:viral envelope"/>
    <property type="evidence" value="ECO:0007669"/>
    <property type="project" value="UniProtKB-KW"/>
</dbReference>
<dbReference type="GO" id="GO:0055036">
    <property type="term" value="C:virion membrane"/>
    <property type="evidence" value="ECO:0007669"/>
    <property type="project" value="UniProtKB-SubCell"/>
</dbReference>
<dbReference type="Gene3D" id="2.60.40.10">
    <property type="entry name" value="Immunoglobulins"/>
    <property type="match status" value="1"/>
</dbReference>
<dbReference type="InterPro" id="IPR007110">
    <property type="entry name" value="Ig-like_dom"/>
</dbReference>
<dbReference type="InterPro" id="IPR036179">
    <property type="entry name" value="Ig-like_dom_sf"/>
</dbReference>
<dbReference type="InterPro" id="IPR013783">
    <property type="entry name" value="Ig-like_fold"/>
</dbReference>
<dbReference type="InterPro" id="IPR003599">
    <property type="entry name" value="Ig_sub"/>
</dbReference>
<dbReference type="InterPro" id="IPR013106">
    <property type="entry name" value="Ig_V-set"/>
</dbReference>
<dbReference type="Pfam" id="PF07686">
    <property type="entry name" value="V-set"/>
    <property type="match status" value="1"/>
</dbReference>
<dbReference type="SMART" id="SM00409">
    <property type="entry name" value="IG"/>
    <property type="match status" value="1"/>
</dbReference>
<dbReference type="SUPFAM" id="SSF48726">
    <property type="entry name" value="Immunoglobulin"/>
    <property type="match status" value="1"/>
</dbReference>
<dbReference type="PROSITE" id="PS50835">
    <property type="entry name" value="IG_LIKE"/>
    <property type="match status" value="1"/>
</dbReference>
<organism>
    <name type="scientific">Vaccinia virus (strain IHD-J)</name>
    <name type="common">VACV</name>
    <dbReference type="NCBI Taxonomy" id="10251"/>
    <lineage>
        <taxon>Viruses</taxon>
        <taxon>Varidnaviria</taxon>
        <taxon>Bamfordvirae</taxon>
        <taxon>Nucleocytoviricota</taxon>
        <taxon>Pokkesviricetes</taxon>
        <taxon>Chitovirales</taxon>
        <taxon>Poxviridae</taxon>
        <taxon>Chordopoxvirinae</taxon>
        <taxon>Orthopoxvirus</taxon>
        <taxon>Vaccinia virus</taxon>
    </lineage>
</organism>
<feature type="signal peptide">
    <location>
        <begin position="1"/>
        <end position="16"/>
    </location>
</feature>
<feature type="chain" id="PRO_0000040566" description="Protein OPG185">
    <location>
        <begin position="17"/>
        <end position="315"/>
    </location>
</feature>
<feature type="topological domain" description="Virion surface" evidence="2">
    <location>
        <begin position="17"/>
        <end position="279"/>
    </location>
</feature>
<feature type="transmembrane region" description="Helical" evidence="2">
    <location>
        <begin position="280"/>
        <end position="303"/>
    </location>
</feature>
<feature type="topological domain" description="Intravirion" evidence="2">
    <location>
        <begin position="304"/>
        <end position="315"/>
    </location>
</feature>
<feature type="domain" description="Ig-like V-type">
    <location>
        <begin position="17"/>
        <end position="121"/>
    </location>
</feature>
<feature type="region of interest" description="Disordered" evidence="4">
    <location>
        <begin position="193"/>
        <end position="213"/>
    </location>
</feature>
<feature type="compositionally biased region" description="Polar residues" evidence="4">
    <location>
        <begin position="193"/>
        <end position="202"/>
    </location>
</feature>
<feature type="glycosylation site" description="N-linked (GlcNAc...) asparagine; by host" evidence="2">
    <location>
        <position position="37"/>
    </location>
</feature>
<feature type="glycosylation site" description="N-linked (GlcNAc...) asparagine; by host" evidence="2">
    <location>
        <position position="69"/>
    </location>
</feature>
<feature type="glycosylation site" description="N-linked (GlcNAc...) asparagine; by host" evidence="2">
    <location>
        <position position="112"/>
    </location>
</feature>
<feature type="glycosylation site" description="N-linked (GlcNAc...) asparagine; by host" evidence="2">
    <location>
        <position position="161"/>
    </location>
</feature>
<feature type="glycosylation site" description="N-linked (GlcNAc...) asparagine; by host" evidence="2">
    <location>
        <position position="254"/>
    </location>
</feature>
<feature type="disulfide bond" evidence="3">
    <location>
        <begin position="34"/>
        <end position="103"/>
    </location>
</feature>
<feature type="disulfide bond" description="Interchain (with C-20 in complement control protein C3)" evidence="3">
    <location>
        <position position="162"/>
    </location>
</feature>
<proteinExistence type="evidence at transcript level"/>
<name>HEMA_VACCI</name>